<organism>
    <name type="scientific">Alkaliphilus metalliredigens (strain QYMF)</name>
    <dbReference type="NCBI Taxonomy" id="293826"/>
    <lineage>
        <taxon>Bacteria</taxon>
        <taxon>Bacillati</taxon>
        <taxon>Bacillota</taxon>
        <taxon>Clostridia</taxon>
        <taxon>Peptostreptococcales</taxon>
        <taxon>Natronincolaceae</taxon>
        <taxon>Alkaliphilus</taxon>
    </lineage>
</organism>
<protein>
    <recommendedName>
        <fullName evidence="1">Small ribosomal subunit protein uS10</fullName>
    </recommendedName>
    <alternativeName>
        <fullName evidence="2">30S ribosomal protein S10</fullName>
    </alternativeName>
</protein>
<gene>
    <name evidence="1" type="primary">rpsJ</name>
    <name type="ordered locus">Amet_4479</name>
</gene>
<evidence type="ECO:0000255" key="1">
    <source>
        <dbReference type="HAMAP-Rule" id="MF_00508"/>
    </source>
</evidence>
<evidence type="ECO:0000305" key="2"/>
<sequence>MSKANQKIRIRLKGYDHKAVDQSAEKIVATAKKSGAEVSGPIPLPTEKQIITILRAVHKYKDAREQFEMRTHKRLIDILSPTPKTVDLLMRLDLPAGVDIEIKL</sequence>
<accession>A6TWI3</accession>
<keyword id="KW-1185">Reference proteome</keyword>
<keyword id="KW-0687">Ribonucleoprotein</keyword>
<keyword id="KW-0689">Ribosomal protein</keyword>
<reference key="1">
    <citation type="journal article" date="2016" name="Genome Announc.">
        <title>Complete genome sequence of Alkaliphilus metalliredigens strain QYMF, an alkaliphilic and metal-reducing bacterium isolated from borax-contaminated leachate ponds.</title>
        <authorList>
            <person name="Hwang C."/>
            <person name="Copeland A."/>
            <person name="Lucas S."/>
            <person name="Lapidus A."/>
            <person name="Barry K."/>
            <person name="Detter J.C."/>
            <person name="Glavina Del Rio T."/>
            <person name="Hammon N."/>
            <person name="Israni S."/>
            <person name="Dalin E."/>
            <person name="Tice H."/>
            <person name="Pitluck S."/>
            <person name="Chertkov O."/>
            <person name="Brettin T."/>
            <person name="Bruce D."/>
            <person name="Han C."/>
            <person name="Schmutz J."/>
            <person name="Larimer F."/>
            <person name="Land M.L."/>
            <person name="Hauser L."/>
            <person name="Kyrpides N."/>
            <person name="Mikhailova N."/>
            <person name="Ye Q."/>
            <person name="Zhou J."/>
            <person name="Richardson P."/>
            <person name="Fields M.W."/>
        </authorList>
    </citation>
    <scope>NUCLEOTIDE SEQUENCE [LARGE SCALE GENOMIC DNA]</scope>
    <source>
        <strain>QYMF</strain>
    </source>
</reference>
<dbReference type="EMBL" id="CP000724">
    <property type="protein sequence ID" value="ABR50551.1"/>
    <property type="molecule type" value="Genomic_DNA"/>
</dbReference>
<dbReference type="RefSeq" id="WP_012065442.1">
    <property type="nucleotide sequence ID" value="NC_009633.1"/>
</dbReference>
<dbReference type="SMR" id="A6TWI3"/>
<dbReference type="STRING" id="293826.Amet_4479"/>
<dbReference type="KEGG" id="amt:Amet_4479"/>
<dbReference type="eggNOG" id="COG0051">
    <property type="taxonomic scope" value="Bacteria"/>
</dbReference>
<dbReference type="HOGENOM" id="CLU_122625_1_3_9"/>
<dbReference type="OrthoDB" id="9804464at2"/>
<dbReference type="Proteomes" id="UP000001572">
    <property type="component" value="Chromosome"/>
</dbReference>
<dbReference type="GO" id="GO:1990904">
    <property type="term" value="C:ribonucleoprotein complex"/>
    <property type="evidence" value="ECO:0007669"/>
    <property type="project" value="UniProtKB-KW"/>
</dbReference>
<dbReference type="GO" id="GO:0005840">
    <property type="term" value="C:ribosome"/>
    <property type="evidence" value="ECO:0007669"/>
    <property type="project" value="UniProtKB-KW"/>
</dbReference>
<dbReference type="GO" id="GO:0003735">
    <property type="term" value="F:structural constituent of ribosome"/>
    <property type="evidence" value="ECO:0007669"/>
    <property type="project" value="InterPro"/>
</dbReference>
<dbReference type="GO" id="GO:0000049">
    <property type="term" value="F:tRNA binding"/>
    <property type="evidence" value="ECO:0007669"/>
    <property type="project" value="UniProtKB-UniRule"/>
</dbReference>
<dbReference type="GO" id="GO:0006412">
    <property type="term" value="P:translation"/>
    <property type="evidence" value="ECO:0007669"/>
    <property type="project" value="UniProtKB-UniRule"/>
</dbReference>
<dbReference type="FunFam" id="3.30.70.600:FF:000001">
    <property type="entry name" value="30S ribosomal protein S10"/>
    <property type="match status" value="1"/>
</dbReference>
<dbReference type="Gene3D" id="3.30.70.600">
    <property type="entry name" value="Ribosomal protein S10 domain"/>
    <property type="match status" value="1"/>
</dbReference>
<dbReference type="HAMAP" id="MF_00508">
    <property type="entry name" value="Ribosomal_uS10"/>
    <property type="match status" value="1"/>
</dbReference>
<dbReference type="InterPro" id="IPR001848">
    <property type="entry name" value="Ribosomal_uS10"/>
</dbReference>
<dbReference type="InterPro" id="IPR018268">
    <property type="entry name" value="Ribosomal_uS10_CS"/>
</dbReference>
<dbReference type="InterPro" id="IPR027486">
    <property type="entry name" value="Ribosomal_uS10_dom"/>
</dbReference>
<dbReference type="InterPro" id="IPR036838">
    <property type="entry name" value="Ribosomal_uS10_dom_sf"/>
</dbReference>
<dbReference type="NCBIfam" id="NF001861">
    <property type="entry name" value="PRK00596.1"/>
    <property type="match status" value="1"/>
</dbReference>
<dbReference type="NCBIfam" id="TIGR01049">
    <property type="entry name" value="rpsJ_bact"/>
    <property type="match status" value="1"/>
</dbReference>
<dbReference type="PANTHER" id="PTHR11700">
    <property type="entry name" value="30S RIBOSOMAL PROTEIN S10 FAMILY MEMBER"/>
    <property type="match status" value="1"/>
</dbReference>
<dbReference type="Pfam" id="PF00338">
    <property type="entry name" value="Ribosomal_S10"/>
    <property type="match status" value="1"/>
</dbReference>
<dbReference type="PRINTS" id="PR00971">
    <property type="entry name" value="RIBOSOMALS10"/>
</dbReference>
<dbReference type="SMART" id="SM01403">
    <property type="entry name" value="Ribosomal_S10"/>
    <property type="match status" value="1"/>
</dbReference>
<dbReference type="SUPFAM" id="SSF54999">
    <property type="entry name" value="Ribosomal protein S10"/>
    <property type="match status" value="1"/>
</dbReference>
<dbReference type="PROSITE" id="PS00361">
    <property type="entry name" value="RIBOSOMAL_S10"/>
    <property type="match status" value="1"/>
</dbReference>
<comment type="function">
    <text evidence="1">Involved in the binding of tRNA to the ribosomes.</text>
</comment>
<comment type="subunit">
    <text evidence="1">Part of the 30S ribosomal subunit.</text>
</comment>
<comment type="similarity">
    <text evidence="1">Belongs to the universal ribosomal protein uS10 family.</text>
</comment>
<feature type="chain" id="PRO_1000060852" description="Small ribosomal subunit protein uS10">
    <location>
        <begin position="1"/>
        <end position="104"/>
    </location>
</feature>
<proteinExistence type="inferred from homology"/>
<name>RS10_ALKMQ</name>